<gene>
    <name evidence="5" type="primary">dpmpJ</name>
    <name type="ORF">MPH_09193</name>
</gene>
<accession>K2RLM2</accession>
<proteinExistence type="evidence at protein level"/>
<organism>
    <name type="scientific">Macrophomina phaseolina (strain MS6)</name>
    <name type="common">Charcoal rot fungus</name>
    <dbReference type="NCBI Taxonomy" id="1126212"/>
    <lineage>
        <taxon>Eukaryota</taxon>
        <taxon>Fungi</taxon>
        <taxon>Dikarya</taxon>
        <taxon>Ascomycota</taxon>
        <taxon>Pezizomycotina</taxon>
        <taxon>Dothideomycetes</taxon>
        <taxon>Dothideomycetes incertae sedis</taxon>
        <taxon>Botryosphaeriales</taxon>
        <taxon>Botryosphaeriaceae</taxon>
        <taxon>Macrophomina</taxon>
    </lineage>
</organism>
<feature type="chain" id="PRO_0000451557" description="Cytochrome P450 monooxygenase dpmpJ">
    <location>
        <begin position="1"/>
        <end position="337" status="greater than"/>
    </location>
</feature>
<feature type="transmembrane region" description="Helical" evidence="2">
    <location>
        <begin position="4"/>
        <end position="24"/>
    </location>
</feature>
<feature type="glycosylation site" description="N-linked (GlcNAc...) asparagine" evidence="3">
    <location>
        <position position="158"/>
    </location>
</feature>
<feature type="non-terminal residue" evidence="6">
    <location>
        <position position="337"/>
    </location>
</feature>
<protein>
    <recommendedName>
        <fullName evidence="5">Cytochrome P450 monooxygenase dpmpJ</fullName>
        <ecNumber evidence="4">1.-.-.-</ecNumber>
    </recommendedName>
    <alternativeName>
        <fullName evidence="5">Diterpenoid pyrone biosynthesis cluster protein J</fullName>
    </alternativeName>
</protein>
<comment type="function">
    <text evidence="4 7">Cytochrome P450 monooxygenase; part of the gene cluster that mediates the biosynthesis of diterpenoid pyrones (PubMed:32286350). The first step of the pathway is the synthesis of the alpha-pyrone moiety by the polyketide synthase dpmpA via condensation of one acetyl-CoA starter unit with 3 malonyl-CoA units and 2 methylations (Probable). The alpha-pyrone is then combined with geranylgeranyl pyrophosphate (GGPP) formed by the GGPP synthase dpmpD through the action of the prenyltransferase dpmpC to yield a linear alpha-pyrone diterpenoid (Probable). Subsequent steps in the diterpenoid pyrone biosynthetic pathway involve the decalin core formation, which is initiated by the epoxidation of the C10-C11 olefin by the FAD-dependent oxidoreductase dpmpE, and is followed by a cyclization cascade catalyzed by the terpene cyclase dpmpB (Probable). The short chain dehydrogenase/reductase dpmpG then oxidizes the 8S hydroxy group to a ketone and the short chain dehydrogenase/reductase dpmpH reduces the ketone to the 8R hydroxy group to yield higginsianin B (PubMed:32286350). Higginsianin B is further methylated by the methyltransferase dpmpI to produce the intermediate named FDDP B (PubMed:32286350). The cytochrome P450 monooxygenase dpmpJ then oxidizes the C-26 methyl to primary alcohol, producing the final diterpenoid pyrone with a C-26 primary alcohol on the gamma-pyrone moiety named FDDP C (PubMed:32286350).</text>
</comment>
<comment type="cofactor">
    <cofactor evidence="1">
        <name>heme</name>
        <dbReference type="ChEBI" id="CHEBI:30413"/>
    </cofactor>
</comment>
<comment type="pathway">
    <text evidence="4">Secondary metabolite biosynthesis; terpenoid biosynthesis.</text>
</comment>
<comment type="subcellular location">
    <subcellularLocation>
        <location evidence="2">Membrane</location>
        <topology evidence="2">Single-pass membrane protein</topology>
    </subcellularLocation>
</comment>
<comment type="biotechnology">
    <text evidence="4">Diterpenoid pyrones display various biological activities and FDDP C shows anti-cancer and anti-HIV activities (PubMed:32286350). FDDP C also shows inhibitory activity of 42-mer-amyloid beta aggregation that is involved in the pathogenesis of Alzheimer's disease (PubMed:32286350).</text>
</comment>
<comment type="similarity">
    <text evidence="6">Belongs to the cytochrome P450 family.</text>
</comment>
<dbReference type="EC" id="1.-.-.-" evidence="4"/>
<dbReference type="EMBL" id="AHHD01000387">
    <property type="protein sequence ID" value="EKG13727.1"/>
    <property type="molecule type" value="Genomic_DNA"/>
</dbReference>
<dbReference type="STRING" id="1126212.K2RLM2"/>
<dbReference type="GlyCosmos" id="K2RLM2">
    <property type="glycosylation" value="1 site, No reported glycans"/>
</dbReference>
<dbReference type="VEuPathDB" id="FungiDB:MPH_09193"/>
<dbReference type="eggNOG" id="KOG0159">
    <property type="taxonomic scope" value="Eukaryota"/>
</dbReference>
<dbReference type="HOGENOM" id="CLU_001570_14_4_1"/>
<dbReference type="InParanoid" id="K2RLM2"/>
<dbReference type="OrthoDB" id="3945418at2759"/>
<dbReference type="UniPathway" id="UPA00213"/>
<dbReference type="Proteomes" id="UP000007129">
    <property type="component" value="Unassembled WGS sequence"/>
</dbReference>
<dbReference type="GO" id="GO:0016020">
    <property type="term" value="C:membrane"/>
    <property type="evidence" value="ECO:0007669"/>
    <property type="project" value="UniProtKB-SubCell"/>
</dbReference>
<dbReference type="GO" id="GO:0020037">
    <property type="term" value="F:heme binding"/>
    <property type="evidence" value="ECO:0007669"/>
    <property type="project" value="InterPro"/>
</dbReference>
<dbReference type="GO" id="GO:0005506">
    <property type="term" value="F:iron ion binding"/>
    <property type="evidence" value="ECO:0007669"/>
    <property type="project" value="InterPro"/>
</dbReference>
<dbReference type="GO" id="GO:0004497">
    <property type="term" value="F:monooxygenase activity"/>
    <property type="evidence" value="ECO:0007669"/>
    <property type="project" value="UniProtKB-KW"/>
</dbReference>
<dbReference type="GO" id="GO:0016705">
    <property type="term" value="F:oxidoreductase activity, acting on paired donors, with incorporation or reduction of molecular oxygen"/>
    <property type="evidence" value="ECO:0007669"/>
    <property type="project" value="InterPro"/>
</dbReference>
<dbReference type="GO" id="GO:0016114">
    <property type="term" value="P:terpenoid biosynthetic process"/>
    <property type="evidence" value="ECO:0007669"/>
    <property type="project" value="UniProtKB-UniPathway"/>
</dbReference>
<dbReference type="CDD" id="cd11062">
    <property type="entry name" value="CYP58-like"/>
    <property type="match status" value="1"/>
</dbReference>
<dbReference type="Gene3D" id="1.10.630.10">
    <property type="entry name" value="Cytochrome P450"/>
    <property type="match status" value="1"/>
</dbReference>
<dbReference type="InterPro" id="IPR001128">
    <property type="entry name" value="Cyt_P450"/>
</dbReference>
<dbReference type="InterPro" id="IPR036396">
    <property type="entry name" value="Cyt_P450_sf"/>
</dbReference>
<dbReference type="InterPro" id="IPR050121">
    <property type="entry name" value="Cytochrome_P450_monoxygenase"/>
</dbReference>
<dbReference type="PANTHER" id="PTHR24305">
    <property type="entry name" value="CYTOCHROME P450"/>
    <property type="match status" value="1"/>
</dbReference>
<dbReference type="PANTHER" id="PTHR24305:SF157">
    <property type="entry name" value="N-ACETYLTRYPTOPHAN 6-HYDROXYLASE IVOC-RELATED"/>
    <property type="match status" value="1"/>
</dbReference>
<dbReference type="Pfam" id="PF00067">
    <property type="entry name" value="p450"/>
    <property type="match status" value="1"/>
</dbReference>
<dbReference type="SUPFAM" id="SSF48264">
    <property type="entry name" value="Cytochrome P450"/>
    <property type="match status" value="1"/>
</dbReference>
<name>DPMPJ_MACPH</name>
<reference key="1">
    <citation type="journal article" date="2012" name="BMC Genomics">
        <title>Tools to kill: Genome of one of the most destructive plant pathogenic fungi Macrophomina phaseolina.</title>
        <authorList>
            <person name="Islam M.S."/>
            <person name="Haque M.S."/>
            <person name="Islam M.M."/>
            <person name="Emdad E.M."/>
            <person name="Halim A."/>
            <person name="Hossen Q.M.M."/>
            <person name="Hossain M.Z."/>
            <person name="Ahmed B."/>
            <person name="Rahim S."/>
            <person name="Rahman M.S."/>
            <person name="Alam M.M."/>
            <person name="Hou S."/>
            <person name="Wan X."/>
            <person name="Saito J.A."/>
            <person name="Alam M."/>
        </authorList>
    </citation>
    <scope>NUCLEOTIDE SEQUENCE [LARGE SCALE GENOMIC DNA]</scope>
    <source>
        <strain>MS6</strain>
    </source>
</reference>
<reference key="2">
    <citation type="journal article" date="2020" name="Nat. Commun.">
        <title>Synthetic biology based construction of biological activity-related library of fungal decalin-containing diterpenoid pyrones.</title>
        <authorList>
            <person name="Tsukada K."/>
            <person name="Shinki S."/>
            <person name="Kaneko A."/>
            <person name="Murakami K."/>
            <person name="Irie K."/>
            <person name="Murai M."/>
            <person name="Miyoshi H."/>
            <person name="Dan S."/>
            <person name="Kawaji K."/>
            <person name="Hayashi H."/>
            <person name="Kodama E.N."/>
            <person name="Hori A."/>
            <person name="Salim E."/>
            <person name="Kuraishi T."/>
            <person name="Hirata N."/>
            <person name="Kanda Y."/>
            <person name="Asai T."/>
        </authorList>
    </citation>
    <scope>FUNCTION</scope>
    <scope>CATALYTIC ACTIVITY</scope>
    <scope>PATHWAY</scope>
    <scope>BIOTECHNOLOGY</scope>
</reference>
<sequence length="337" mass="38103">MLQLILHHPYASLAAGILLYFFCLATYRLYLSPVAGFPGPRLAALTRFYEYYYDGVKGGQFVWKVKDLHQKYGRLSCSTVVGQELKLEQGPIVRIGPCELHVNDPTFVSTLYPATGQRRNKDPFWTDQFGPKTAFGTVDHDHHRLRRGPFNRFFSKANVTRLEPMLRQQANKLCEKLEKYAGTGRVIDLSDPFGCMATDIISTYALGYSFNFLDAEDFQPNLLQGLNGFTPLAPTVKQFPWLLKLLRALPDSWALKINPKIAPFLDFQRTMKKVITDVEAEVQSEAGRPKADQATTIFHEVLRGDIPPEEKETARLWQEGEAIIGAGTFLQTPQEAV</sequence>
<keyword id="KW-0325">Glycoprotein</keyword>
<keyword id="KW-0349">Heme</keyword>
<keyword id="KW-0408">Iron</keyword>
<keyword id="KW-0472">Membrane</keyword>
<keyword id="KW-0479">Metal-binding</keyword>
<keyword id="KW-0503">Monooxygenase</keyword>
<keyword id="KW-0560">Oxidoreductase</keyword>
<keyword id="KW-1185">Reference proteome</keyword>
<keyword id="KW-0812">Transmembrane</keyword>
<keyword id="KW-1133">Transmembrane helix</keyword>
<evidence type="ECO:0000250" key="1">
    <source>
        <dbReference type="UniProtKB" id="P04798"/>
    </source>
</evidence>
<evidence type="ECO:0000255" key="2"/>
<evidence type="ECO:0000255" key="3">
    <source>
        <dbReference type="PROSITE-ProRule" id="PRU00498"/>
    </source>
</evidence>
<evidence type="ECO:0000269" key="4">
    <source>
    </source>
</evidence>
<evidence type="ECO:0000303" key="5">
    <source>
    </source>
</evidence>
<evidence type="ECO:0000305" key="6"/>
<evidence type="ECO:0000305" key="7">
    <source>
    </source>
</evidence>